<reference evidence="3" key="1">
    <citation type="journal article" date="2007" name="Nature">
        <title>Evolution of genes and genomes on the Drosophila phylogeny.</title>
        <authorList>
            <consortium name="Drosophila 12 genomes consortium"/>
        </authorList>
    </citation>
    <scope>NUCLEOTIDE SEQUENCE [LARGE SCALE GENOMIC DNA]</scope>
    <source>
        <strain evidence="3">Rob3c / Tucson 14021-0248.25</strain>
    </source>
</reference>
<sequence length="151" mass="17413">MGSDDQSAGDRIQKGFQINYMILRDADSGKIIWQENKDFSAPDHEHEARVPVKILDMRAVSREINFSTIESMENFRLDQKVLFKGRIMEEWFFEMGFVGANTTNTWQSTIEAAPESQMMPAKVLNGNVTIQTSFYDNETLITKSVVRLYYI</sequence>
<proteinExistence type="inferred from homology"/>
<keyword id="KW-0140">cGMP</keyword>
<keyword id="KW-0963">Cytoplasm</keyword>
<keyword id="KW-0539">Nucleus</keyword>
<keyword id="KW-1185">Reference proteome</keyword>
<dbReference type="EMBL" id="CH480818">
    <property type="protein sequence ID" value="EDW52182.1"/>
    <property type="molecule type" value="Genomic_DNA"/>
</dbReference>
<dbReference type="SMR" id="B4HYQ2"/>
<dbReference type="STRING" id="7238.B4HYQ2"/>
<dbReference type="EnsemblMetazoa" id="FBtr0195755">
    <property type="protein sequence ID" value="FBpp0194247"/>
    <property type="gene ID" value="FBgn0167706"/>
</dbReference>
<dbReference type="EnsemblMetazoa" id="XM_002036223.2">
    <property type="protein sequence ID" value="XP_002036259.1"/>
    <property type="gene ID" value="LOC6611736"/>
</dbReference>
<dbReference type="GeneID" id="6611736"/>
<dbReference type="KEGG" id="dse:6611736"/>
<dbReference type="HOGENOM" id="CLU_119682_0_0_1"/>
<dbReference type="OMA" id="STNTWQN"/>
<dbReference type="OrthoDB" id="4234at7215"/>
<dbReference type="PhylomeDB" id="B4HYQ2"/>
<dbReference type="Proteomes" id="UP000001292">
    <property type="component" value="Unassembled WGS sequence"/>
</dbReference>
<dbReference type="GO" id="GO:0005737">
    <property type="term" value="C:cytoplasm"/>
    <property type="evidence" value="ECO:0000250"/>
    <property type="project" value="UniProtKB"/>
</dbReference>
<dbReference type="GO" id="GO:0005634">
    <property type="term" value="C:nucleus"/>
    <property type="evidence" value="ECO:0000250"/>
    <property type="project" value="UniProtKB"/>
</dbReference>
<dbReference type="GO" id="GO:0050953">
    <property type="term" value="P:sensory perception of light stimulus"/>
    <property type="evidence" value="ECO:0007669"/>
    <property type="project" value="InterPro"/>
</dbReference>
<dbReference type="FunFam" id="2.70.50.40:FF:000002">
    <property type="entry name" value="Retinal rod rhodopsin-sensitive cGMP 3',5'-cyclic phosphodiesterase subunit delta"/>
    <property type="match status" value="1"/>
</dbReference>
<dbReference type="Gene3D" id="2.70.50.40">
    <property type="entry name" value="GMP phosphodiesterase, delta subunit"/>
    <property type="match status" value="1"/>
</dbReference>
<dbReference type="InterPro" id="IPR014756">
    <property type="entry name" value="Ig_E-set"/>
</dbReference>
<dbReference type="InterPro" id="IPR008015">
    <property type="entry name" value="PDED_dom"/>
</dbReference>
<dbReference type="InterPro" id="IPR037036">
    <property type="entry name" value="PDED_dom_sf"/>
</dbReference>
<dbReference type="InterPro" id="IPR017287">
    <property type="entry name" value="Rhodop-sen_GMP-Pdiesterase_dsu"/>
</dbReference>
<dbReference type="PANTHER" id="PTHR12976">
    <property type="entry name" value="RETINAL ROD RHODOPSIN-SENSITIVE CGMP 3',5'-CYCLIC PHOSPHODIESTERASE DELTA-SUBUNIT"/>
    <property type="match status" value="1"/>
</dbReference>
<dbReference type="PANTHER" id="PTHR12976:SF0">
    <property type="entry name" value="RETINAL ROD RHODOPSIN-SENSITIVE CGMP 3',5'-CYCLIC PHOSPHODIESTERASE SUBUNIT DELTA"/>
    <property type="match status" value="1"/>
</dbReference>
<dbReference type="Pfam" id="PF05351">
    <property type="entry name" value="GMP_PDE_delta"/>
    <property type="match status" value="1"/>
</dbReference>
<dbReference type="PIRSF" id="PIRSF037825">
    <property type="entry name" value="GMP-Pdiesterase_delta"/>
    <property type="match status" value="1"/>
</dbReference>
<dbReference type="SUPFAM" id="SSF81296">
    <property type="entry name" value="E set domains"/>
    <property type="match status" value="1"/>
</dbReference>
<organism>
    <name type="scientific">Drosophila sechellia</name>
    <name type="common">Fruit fly</name>
    <dbReference type="NCBI Taxonomy" id="7238"/>
    <lineage>
        <taxon>Eukaryota</taxon>
        <taxon>Metazoa</taxon>
        <taxon>Ecdysozoa</taxon>
        <taxon>Arthropoda</taxon>
        <taxon>Hexapoda</taxon>
        <taxon>Insecta</taxon>
        <taxon>Pterygota</taxon>
        <taxon>Neoptera</taxon>
        <taxon>Endopterygota</taxon>
        <taxon>Diptera</taxon>
        <taxon>Brachycera</taxon>
        <taxon>Muscomorpha</taxon>
        <taxon>Ephydroidea</taxon>
        <taxon>Drosophilidae</taxon>
        <taxon>Drosophila</taxon>
        <taxon>Sophophora</taxon>
    </lineage>
</organism>
<gene>
    <name evidence="1" type="primary">PrBP</name>
    <name type="ORF">GM12770</name>
</gene>
<feature type="chain" id="PRO_0000363679" description="Probable cGMP 3',5'-cyclic phosphodiesterase subunit delta">
    <location>
        <begin position="1"/>
        <end position="151"/>
    </location>
</feature>
<protein>
    <recommendedName>
        <fullName>Probable cGMP 3',5'-cyclic phosphodiesterase subunit delta</fullName>
    </recommendedName>
</protein>
<evidence type="ECO:0000250" key="1">
    <source>
        <dbReference type="UniProtKB" id="Q9VLJ0"/>
    </source>
</evidence>
<evidence type="ECO:0000255" key="2"/>
<evidence type="ECO:0000312" key="3">
    <source>
        <dbReference type="EMBL" id="EDW52182.1"/>
    </source>
</evidence>
<accession>B4HYQ2</accession>
<comment type="subunit">
    <text evidence="1">Interacts with Pde6.</text>
</comment>
<comment type="subcellular location">
    <subcellularLocation>
        <location evidence="1">Nucleus</location>
    </subcellularLocation>
    <subcellularLocation>
        <location evidence="1">Cytoplasm</location>
    </subcellularLocation>
</comment>
<comment type="similarity">
    <text evidence="2">Belongs to the PDE6D/unc-119 family.</text>
</comment>
<name>PDE6D_DROSE</name>